<sequence length="325" mass="36600">MSPKNLLKGFKRPKKIEFTTDVNTPNYGKFVAEPFERGIGTTIGNSLRRTLMSSIEGAAISAIRIEGVSHEFSYIEGVAEDVTRIILNLKQVRIKYEPEDKEASKVIHLELKGAGYFRAADLAVDSSIEIMNPDLHIATLNEDANLIMDLEIQRGRGYVPAEDKKKDIEVLGTIPIDSIFSPIQKVLFEVSETRVAQRSDYEKLTMEVWTDGSVSPEDAVAQAAKILKDHLTVFINFEEEIEEEEEELDEADEKLKAALSKHVEELELSVRSTNVLRSLEIDFIGELVKRSEDEMTKSKHFSEQSLLELKAKLSSMGLSFGMRDF</sequence>
<protein>
    <recommendedName>
        <fullName evidence="1">DNA-directed RNA polymerase subunit alpha</fullName>
        <shortName evidence="1">RNAP subunit alpha</shortName>
        <ecNumber evidence="1">2.7.7.6</ecNumber>
    </recommendedName>
    <alternativeName>
        <fullName evidence="1">RNA polymerase subunit alpha</fullName>
    </alternativeName>
    <alternativeName>
        <fullName evidence="1">Transcriptase subunit alpha</fullName>
    </alternativeName>
</protein>
<feature type="chain" id="PRO_1000091953" description="DNA-directed RNA polymerase subunit alpha">
    <location>
        <begin position="1"/>
        <end position="325"/>
    </location>
</feature>
<feature type="region of interest" description="Alpha N-terminal domain (alpha-NTD)" evidence="1">
    <location>
        <begin position="1"/>
        <end position="238"/>
    </location>
</feature>
<feature type="region of interest" description="Alpha C-terminal domain (alpha-CTD)" evidence="1">
    <location>
        <begin position="255"/>
        <end position="325"/>
    </location>
</feature>
<organism>
    <name type="scientific">Leptospira biflexa serovar Patoc (strain Patoc 1 / Ames)</name>
    <dbReference type="NCBI Taxonomy" id="355278"/>
    <lineage>
        <taxon>Bacteria</taxon>
        <taxon>Pseudomonadati</taxon>
        <taxon>Spirochaetota</taxon>
        <taxon>Spirochaetia</taxon>
        <taxon>Leptospirales</taxon>
        <taxon>Leptospiraceae</taxon>
        <taxon>Leptospira</taxon>
    </lineage>
</organism>
<evidence type="ECO:0000255" key="1">
    <source>
        <dbReference type="HAMAP-Rule" id="MF_00059"/>
    </source>
</evidence>
<dbReference type="EC" id="2.7.7.6" evidence="1"/>
<dbReference type="EMBL" id="CP000777">
    <property type="protein sequence ID" value="ABZ94390.1"/>
    <property type="molecule type" value="Genomic_DNA"/>
</dbReference>
<dbReference type="RefSeq" id="WP_012388920.1">
    <property type="nucleotide sequence ID" value="NC_010842.1"/>
</dbReference>
<dbReference type="SMR" id="B0SA20"/>
<dbReference type="KEGG" id="lbf:LBF_1886"/>
<dbReference type="HOGENOM" id="CLU_053084_0_1_12"/>
<dbReference type="GO" id="GO:0005737">
    <property type="term" value="C:cytoplasm"/>
    <property type="evidence" value="ECO:0007669"/>
    <property type="project" value="UniProtKB-ARBA"/>
</dbReference>
<dbReference type="GO" id="GO:0000428">
    <property type="term" value="C:DNA-directed RNA polymerase complex"/>
    <property type="evidence" value="ECO:0007669"/>
    <property type="project" value="UniProtKB-KW"/>
</dbReference>
<dbReference type="GO" id="GO:0003677">
    <property type="term" value="F:DNA binding"/>
    <property type="evidence" value="ECO:0007669"/>
    <property type="project" value="UniProtKB-UniRule"/>
</dbReference>
<dbReference type="GO" id="GO:0003899">
    <property type="term" value="F:DNA-directed RNA polymerase activity"/>
    <property type="evidence" value="ECO:0007669"/>
    <property type="project" value="UniProtKB-UniRule"/>
</dbReference>
<dbReference type="GO" id="GO:0046983">
    <property type="term" value="F:protein dimerization activity"/>
    <property type="evidence" value="ECO:0007669"/>
    <property type="project" value="InterPro"/>
</dbReference>
<dbReference type="GO" id="GO:0006351">
    <property type="term" value="P:DNA-templated transcription"/>
    <property type="evidence" value="ECO:0007669"/>
    <property type="project" value="UniProtKB-UniRule"/>
</dbReference>
<dbReference type="CDD" id="cd06928">
    <property type="entry name" value="RNAP_alpha_NTD"/>
    <property type="match status" value="1"/>
</dbReference>
<dbReference type="FunFam" id="2.170.120.12:FF:000001">
    <property type="entry name" value="DNA-directed RNA polymerase subunit alpha"/>
    <property type="match status" value="1"/>
</dbReference>
<dbReference type="Gene3D" id="1.10.150.20">
    <property type="entry name" value="5' to 3' exonuclease, C-terminal subdomain"/>
    <property type="match status" value="1"/>
</dbReference>
<dbReference type="Gene3D" id="2.170.120.12">
    <property type="entry name" value="DNA-directed RNA polymerase, insert domain"/>
    <property type="match status" value="1"/>
</dbReference>
<dbReference type="Gene3D" id="3.30.1360.10">
    <property type="entry name" value="RNA polymerase, RBP11-like subunit"/>
    <property type="match status" value="1"/>
</dbReference>
<dbReference type="HAMAP" id="MF_00059">
    <property type="entry name" value="RNApol_bact_RpoA"/>
    <property type="match status" value="1"/>
</dbReference>
<dbReference type="InterPro" id="IPR011262">
    <property type="entry name" value="DNA-dir_RNA_pol_insert"/>
</dbReference>
<dbReference type="InterPro" id="IPR011263">
    <property type="entry name" value="DNA-dir_RNA_pol_RpoA/D/Rpb3"/>
</dbReference>
<dbReference type="InterPro" id="IPR011773">
    <property type="entry name" value="DNA-dir_RpoA"/>
</dbReference>
<dbReference type="InterPro" id="IPR036603">
    <property type="entry name" value="RBP11-like"/>
</dbReference>
<dbReference type="InterPro" id="IPR011260">
    <property type="entry name" value="RNAP_asu_C"/>
</dbReference>
<dbReference type="InterPro" id="IPR036643">
    <property type="entry name" value="RNApol_insert_sf"/>
</dbReference>
<dbReference type="NCBIfam" id="NF003513">
    <property type="entry name" value="PRK05182.1-2"/>
    <property type="match status" value="1"/>
</dbReference>
<dbReference type="NCBIfam" id="NF003519">
    <property type="entry name" value="PRK05182.2-5"/>
    <property type="match status" value="1"/>
</dbReference>
<dbReference type="NCBIfam" id="TIGR02027">
    <property type="entry name" value="rpoA"/>
    <property type="match status" value="1"/>
</dbReference>
<dbReference type="Pfam" id="PF01000">
    <property type="entry name" value="RNA_pol_A_bac"/>
    <property type="match status" value="1"/>
</dbReference>
<dbReference type="Pfam" id="PF03118">
    <property type="entry name" value="RNA_pol_A_CTD"/>
    <property type="match status" value="1"/>
</dbReference>
<dbReference type="Pfam" id="PF01193">
    <property type="entry name" value="RNA_pol_L"/>
    <property type="match status" value="1"/>
</dbReference>
<dbReference type="SMART" id="SM00662">
    <property type="entry name" value="RPOLD"/>
    <property type="match status" value="1"/>
</dbReference>
<dbReference type="SUPFAM" id="SSF47789">
    <property type="entry name" value="C-terminal domain of RNA polymerase alpha subunit"/>
    <property type="match status" value="1"/>
</dbReference>
<dbReference type="SUPFAM" id="SSF56553">
    <property type="entry name" value="Insert subdomain of RNA polymerase alpha subunit"/>
    <property type="match status" value="1"/>
</dbReference>
<dbReference type="SUPFAM" id="SSF55257">
    <property type="entry name" value="RBP11-like subunits of RNA polymerase"/>
    <property type="match status" value="1"/>
</dbReference>
<keyword id="KW-0240">DNA-directed RNA polymerase</keyword>
<keyword id="KW-0548">Nucleotidyltransferase</keyword>
<keyword id="KW-0804">Transcription</keyword>
<keyword id="KW-0808">Transferase</keyword>
<comment type="function">
    <text evidence="1">DNA-dependent RNA polymerase catalyzes the transcription of DNA into RNA using the four ribonucleoside triphosphates as substrates.</text>
</comment>
<comment type="catalytic activity">
    <reaction evidence="1">
        <text>RNA(n) + a ribonucleoside 5'-triphosphate = RNA(n+1) + diphosphate</text>
        <dbReference type="Rhea" id="RHEA:21248"/>
        <dbReference type="Rhea" id="RHEA-COMP:14527"/>
        <dbReference type="Rhea" id="RHEA-COMP:17342"/>
        <dbReference type="ChEBI" id="CHEBI:33019"/>
        <dbReference type="ChEBI" id="CHEBI:61557"/>
        <dbReference type="ChEBI" id="CHEBI:140395"/>
        <dbReference type="EC" id="2.7.7.6"/>
    </reaction>
</comment>
<comment type="subunit">
    <text evidence="1">Homodimer. The RNAP catalytic core consists of 2 alpha, 1 beta, 1 beta' and 1 omega subunit. When a sigma factor is associated with the core the holoenzyme is formed, which can initiate transcription.</text>
</comment>
<comment type="domain">
    <text evidence="1">The N-terminal domain is essential for RNAP assembly and basal transcription, whereas the C-terminal domain is involved in interaction with transcriptional regulators and with upstream promoter elements.</text>
</comment>
<comment type="similarity">
    <text evidence="1">Belongs to the RNA polymerase alpha chain family.</text>
</comment>
<gene>
    <name evidence="1" type="primary">rpoA</name>
    <name type="ordered locus">LBF_1886</name>
</gene>
<accession>B0SA20</accession>
<proteinExistence type="inferred from homology"/>
<name>RPOA_LEPBA</name>
<reference key="1">
    <citation type="journal article" date="2008" name="PLoS ONE">
        <title>Genome sequence of the saprophyte Leptospira biflexa provides insights into the evolution of Leptospira and the pathogenesis of leptospirosis.</title>
        <authorList>
            <person name="Picardeau M."/>
            <person name="Bulach D.M."/>
            <person name="Bouchier C."/>
            <person name="Zuerner R.L."/>
            <person name="Zidane N."/>
            <person name="Wilson P.J."/>
            <person name="Creno S."/>
            <person name="Kuczek E.S."/>
            <person name="Bommezzadri S."/>
            <person name="Davis J.C."/>
            <person name="McGrath A."/>
            <person name="Johnson M.J."/>
            <person name="Boursaux-Eude C."/>
            <person name="Seemann T."/>
            <person name="Rouy Z."/>
            <person name="Coppel R.L."/>
            <person name="Rood J.I."/>
            <person name="Lajus A."/>
            <person name="Davies J.K."/>
            <person name="Medigue C."/>
            <person name="Adler B."/>
        </authorList>
    </citation>
    <scope>NUCLEOTIDE SEQUENCE [LARGE SCALE GENOMIC DNA]</scope>
    <source>
        <strain>Patoc 1 / Ames</strain>
    </source>
</reference>